<keyword id="KW-0227">DNA damage</keyword>
<keyword id="KW-0233">DNA recombination</keyword>
<keyword id="KW-0234">DNA repair</keyword>
<keyword id="KW-1185">Reference proteome</keyword>
<name>RECO_SYNFM</name>
<comment type="function">
    <text evidence="1">Involved in DNA repair and RecF pathway recombination.</text>
</comment>
<comment type="similarity">
    <text evidence="1">Belongs to the RecO family.</text>
</comment>
<sequence length="250" mass="28883">MKTTRTEAIILNTRDHGESDRLVGLYTRSGGRLQGIAKGARRSRKRFANTLEPCSLVELQFREKGTLVWLESCKLLEPFLSLRTELIRWGIAALISEIVIEMVPEGDPQPELFELLKETLRQLCEDKDSLNVALLFIFRFQDKMGYLPALENCGICGRSLRSATKWCWQVDRGLLACPDHPVERVRALELDLGTLLLIRQCRSLSLDRIWRLRFLHDTKVQLFYGLLDWVRGHIRKELKSLKLLQQAHST</sequence>
<reference key="1">
    <citation type="submission" date="2006-10" db="EMBL/GenBank/DDBJ databases">
        <title>Complete sequence of Syntrophobacter fumaroxidans MPOB.</title>
        <authorList>
            <consortium name="US DOE Joint Genome Institute"/>
            <person name="Copeland A."/>
            <person name="Lucas S."/>
            <person name="Lapidus A."/>
            <person name="Barry K."/>
            <person name="Detter J.C."/>
            <person name="Glavina del Rio T."/>
            <person name="Hammon N."/>
            <person name="Israni S."/>
            <person name="Pitluck S."/>
            <person name="Goltsman E.G."/>
            <person name="Martinez M."/>
            <person name="Schmutz J."/>
            <person name="Larimer F."/>
            <person name="Land M."/>
            <person name="Hauser L."/>
            <person name="Kyrpides N."/>
            <person name="Kim E."/>
            <person name="Boone D.R."/>
            <person name="Brockman F."/>
            <person name="Culley D."/>
            <person name="Ferry J."/>
            <person name="Gunsalus R."/>
            <person name="McInerney M.J."/>
            <person name="Morrison M."/>
            <person name="Plugge C."/>
            <person name="Rohlin L."/>
            <person name="Scholten J."/>
            <person name="Sieber J."/>
            <person name="Stams A.J.M."/>
            <person name="Worm P."/>
            <person name="Henstra A.M."/>
            <person name="Richardson P."/>
        </authorList>
    </citation>
    <scope>NUCLEOTIDE SEQUENCE [LARGE SCALE GENOMIC DNA]</scope>
    <source>
        <strain>DSM 10017 / MPOB</strain>
    </source>
</reference>
<evidence type="ECO:0000255" key="1">
    <source>
        <dbReference type="HAMAP-Rule" id="MF_00201"/>
    </source>
</evidence>
<dbReference type="EMBL" id="CP000478">
    <property type="protein sequence ID" value="ABK19153.1"/>
    <property type="molecule type" value="Genomic_DNA"/>
</dbReference>
<dbReference type="RefSeq" id="WP_011700278.1">
    <property type="nucleotide sequence ID" value="NC_008554.1"/>
</dbReference>
<dbReference type="SMR" id="A0LP01"/>
<dbReference type="FunCoup" id="A0LP01">
    <property type="interactions" value="49"/>
</dbReference>
<dbReference type="STRING" id="335543.Sfum_3482"/>
<dbReference type="KEGG" id="sfu:Sfum_3482"/>
<dbReference type="eggNOG" id="COG1381">
    <property type="taxonomic scope" value="Bacteria"/>
</dbReference>
<dbReference type="HOGENOM" id="CLU_066632_2_1_7"/>
<dbReference type="InParanoid" id="A0LP01"/>
<dbReference type="Proteomes" id="UP000001784">
    <property type="component" value="Chromosome"/>
</dbReference>
<dbReference type="GO" id="GO:0043590">
    <property type="term" value="C:bacterial nucleoid"/>
    <property type="evidence" value="ECO:0007669"/>
    <property type="project" value="TreeGrafter"/>
</dbReference>
<dbReference type="GO" id="GO:0006310">
    <property type="term" value="P:DNA recombination"/>
    <property type="evidence" value="ECO:0007669"/>
    <property type="project" value="UniProtKB-UniRule"/>
</dbReference>
<dbReference type="GO" id="GO:0006302">
    <property type="term" value="P:double-strand break repair"/>
    <property type="evidence" value="ECO:0007669"/>
    <property type="project" value="TreeGrafter"/>
</dbReference>
<dbReference type="Gene3D" id="2.40.50.140">
    <property type="entry name" value="Nucleic acid-binding proteins"/>
    <property type="match status" value="1"/>
</dbReference>
<dbReference type="Gene3D" id="1.20.1440.120">
    <property type="entry name" value="Recombination protein O, C-terminal domain"/>
    <property type="match status" value="1"/>
</dbReference>
<dbReference type="HAMAP" id="MF_00201">
    <property type="entry name" value="RecO"/>
    <property type="match status" value="1"/>
</dbReference>
<dbReference type="InterPro" id="IPR037278">
    <property type="entry name" value="ARFGAP/RecO"/>
</dbReference>
<dbReference type="InterPro" id="IPR022572">
    <property type="entry name" value="DNA_rep/recomb_RecO_N"/>
</dbReference>
<dbReference type="InterPro" id="IPR012340">
    <property type="entry name" value="NA-bd_OB-fold"/>
</dbReference>
<dbReference type="InterPro" id="IPR003717">
    <property type="entry name" value="RecO"/>
</dbReference>
<dbReference type="InterPro" id="IPR042242">
    <property type="entry name" value="RecO_C"/>
</dbReference>
<dbReference type="NCBIfam" id="TIGR00613">
    <property type="entry name" value="reco"/>
    <property type="match status" value="1"/>
</dbReference>
<dbReference type="PANTHER" id="PTHR33991">
    <property type="entry name" value="DNA REPAIR PROTEIN RECO"/>
    <property type="match status" value="1"/>
</dbReference>
<dbReference type="PANTHER" id="PTHR33991:SF1">
    <property type="entry name" value="DNA REPAIR PROTEIN RECO"/>
    <property type="match status" value="1"/>
</dbReference>
<dbReference type="Pfam" id="PF02565">
    <property type="entry name" value="RecO_C"/>
    <property type="match status" value="1"/>
</dbReference>
<dbReference type="Pfam" id="PF11967">
    <property type="entry name" value="RecO_N"/>
    <property type="match status" value="1"/>
</dbReference>
<dbReference type="SUPFAM" id="SSF57863">
    <property type="entry name" value="ArfGap/RecO-like zinc finger"/>
    <property type="match status" value="1"/>
</dbReference>
<dbReference type="SUPFAM" id="SSF50249">
    <property type="entry name" value="Nucleic acid-binding proteins"/>
    <property type="match status" value="1"/>
</dbReference>
<organism>
    <name type="scientific">Syntrophobacter fumaroxidans (strain DSM 10017 / MPOB)</name>
    <dbReference type="NCBI Taxonomy" id="335543"/>
    <lineage>
        <taxon>Bacteria</taxon>
        <taxon>Pseudomonadati</taxon>
        <taxon>Thermodesulfobacteriota</taxon>
        <taxon>Syntrophobacteria</taxon>
        <taxon>Syntrophobacterales</taxon>
        <taxon>Syntrophobacteraceae</taxon>
        <taxon>Syntrophobacter</taxon>
    </lineage>
</organism>
<feature type="chain" id="PRO_1000071724" description="DNA repair protein RecO">
    <location>
        <begin position="1"/>
        <end position="250"/>
    </location>
</feature>
<protein>
    <recommendedName>
        <fullName evidence="1">DNA repair protein RecO</fullName>
    </recommendedName>
    <alternativeName>
        <fullName evidence="1">Recombination protein O</fullName>
    </alternativeName>
</protein>
<proteinExistence type="inferred from homology"/>
<gene>
    <name evidence="1" type="primary">recO</name>
    <name type="ordered locus">Sfum_3482</name>
</gene>
<accession>A0LP01</accession>